<keyword id="KW-1035">Host cytoplasm</keyword>
<keyword id="KW-1040">Host Golgi apparatus</keyword>
<keyword id="KW-1048">Host nucleus</keyword>
<keyword id="KW-0597">Phosphoprotein</keyword>
<keyword id="KW-0946">Virion</keyword>
<keyword id="KW-0920">Virion tegument</keyword>
<reference key="1">
    <citation type="journal article" date="1991" name="J. Virol.">
        <title>Antigenic and protein sequence homology between VP13/14, a herpes simplex virus type 1 tegument protein, and gp10, a glycoprotein of equine herpesvirus 1 and 4.</title>
        <authorList>
            <person name="Whittaker G.R."/>
            <person name="Riggio M.P."/>
            <person name="Halliburton I.W."/>
            <person name="Killington R.A."/>
            <person name="Allen G.P."/>
            <person name="Meredith D.M."/>
        </authorList>
    </citation>
    <scope>NUCLEOTIDE SEQUENCE [GENOMIC DNA]</scope>
</reference>
<protein>
    <recommendedName>
        <fullName>Tegument protein VP22</fullName>
    </recommendedName>
    <alternativeName>
        <fullName>Gene 11 protein</fullName>
    </alternativeName>
</protein>
<dbReference type="EMBL" id="X17684">
    <property type="protein sequence ID" value="CAA35674.1"/>
    <property type="molecule type" value="Genomic_DNA"/>
</dbReference>
<dbReference type="PIR" id="S36706">
    <property type="entry name" value="S36706"/>
</dbReference>
<dbReference type="SMR" id="Q00039"/>
<dbReference type="GO" id="GO:0044177">
    <property type="term" value="C:host cell Golgi apparatus"/>
    <property type="evidence" value="ECO:0007669"/>
    <property type="project" value="UniProtKB-SubCell"/>
</dbReference>
<dbReference type="GO" id="GO:0042025">
    <property type="term" value="C:host cell nucleus"/>
    <property type="evidence" value="ECO:0007669"/>
    <property type="project" value="UniProtKB-SubCell"/>
</dbReference>
<dbReference type="GO" id="GO:0019033">
    <property type="term" value="C:viral tegument"/>
    <property type="evidence" value="ECO:0007669"/>
    <property type="project" value="UniProtKB-SubCell"/>
</dbReference>
<dbReference type="InterPro" id="IPR006908">
    <property type="entry name" value="Herpes_UL49"/>
</dbReference>
<dbReference type="Pfam" id="PF04823">
    <property type="entry name" value="Herpes_UL49_2"/>
    <property type="match status" value="1"/>
</dbReference>
<sequence length="290" mass="31462">MLTPQRSSYTLQFVTKIGKDDLLAEALLCEKTNFTINSVYLGKMICMTVHAVTMTKFTPDKAERAAHYNPQEHIYETCPGDEFYDACEYSLVGGGKLSTSHGRLSPTKTTPHPKSAGVTPPQRVPARPATRAAAPSATPTQPDCVAKQRTSPGVNSIKSGKSLAFSCTPKTPKTPWYGATHLFNKNVFCAAVSRVAAAHASDAASALWDLDPPKTNEDLDRFLKAAAIRILVCEGSKLLEMANATMERSPDGAAAVAPIGYDRRPRLASRRRSIKCKPPADDFFDDTDSR</sequence>
<organismHost>
    <name type="scientific">Equus caballus</name>
    <name type="common">Horse</name>
    <dbReference type="NCBI Taxonomy" id="9796"/>
</organismHost>
<organism>
    <name type="scientific">Equine herpesvirus 4 (strain 1942)</name>
    <name type="common">EHV-4</name>
    <name type="synonym">Equine rhinopneumonitis virus</name>
    <dbReference type="NCBI Taxonomy" id="10333"/>
    <lineage>
        <taxon>Viruses</taxon>
        <taxon>Duplodnaviria</taxon>
        <taxon>Heunggongvirae</taxon>
        <taxon>Peploviricota</taxon>
        <taxon>Herviviricetes</taxon>
        <taxon>Herpesvirales</taxon>
        <taxon>Orthoherpesviridae</taxon>
        <taxon>Alphaherpesvirinae</taxon>
        <taxon>Varicellovirus</taxon>
        <taxon>Varicellovirus equidalpha4</taxon>
        <taxon>Equid alphaherpesvirus 4</taxon>
    </lineage>
</organism>
<proteinExistence type="inferred from homology"/>
<evidence type="ECO:0000250" key="1">
    <source>
        <dbReference type="UniProtKB" id="P10233"/>
    </source>
</evidence>
<evidence type="ECO:0000250" key="2">
    <source>
        <dbReference type="UniProtKB" id="P30022"/>
    </source>
</evidence>
<evidence type="ECO:0000256" key="3">
    <source>
        <dbReference type="SAM" id="MobiDB-lite"/>
    </source>
</evidence>
<evidence type="ECO:0000305" key="4"/>
<gene>
    <name type="primary">11</name>
    <name type="synonym">B4</name>
</gene>
<comment type="function">
    <text evidence="1">Tegument protein that plays different roles during the time course of infection (By similarity). Participates in both the accumulation of viral mRNAs and viral protein translation at late time of infection (By similarity). Modulates the RNase activity of the virion host shutoff protein UL41 probably to ensure necessary levels of key cellular mRNAs and proteins (By similarity). Plays a role in microtubule reorganization that occurs after viral infection by stabilizing microtubule network (By similarity). Plays a role in the inhibition of host innate immune system by targeting the CGAS enzymatic activity which is the principal cytosolic DNA sensor that detects invading viral DNA. Acts by mediating disruption of liquid-like droplets in which CGAS is activated, thereby preventing CGAS activity (By similarity).</text>
</comment>
<comment type="subunit">
    <text evidence="1">Interacts with gE (via C-terminus); this interaction is necessary for the recruitment of VP22 to the Golgi and its packaging into virions (By similarity). Interacts with gM (via C-terminus) (By similarity). Interacts with VP16; this interaction allows the formation of a tripartite complex composed of VP16, VP22 and UL41/VHS (By similarity). Interacts with the capsid-binding protein UL16 (By similarity). Interacts with host CGAS (By similarity).</text>
</comment>
<comment type="subcellular location">
    <subcellularLocation>
        <location evidence="1">Virion tegument</location>
    </subcellularLocation>
    <subcellularLocation>
        <location evidence="1">Host cytoplasm</location>
    </subcellularLocation>
    <subcellularLocation>
        <location evidence="1">Host nucleus</location>
    </subcellularLocation>
    <subcellularLocation>
        <location evidence="1">Host Golgi apparatus</location>
    </subcellularLocation>
    <text evidence="1">One of the most abundant tegument protein (about 2000 copies per virion). Localizes in the cytoplasm at 8 hours postinfection and in the nucleus at 16 hours postinfection. During virion morphogenesis, this protein probably accumulates at the trans-Golgi where secondary envelopment occurs.</text>
</comment>
<comment type="PTM">
    <text evidence="1">Highly phosphorylated in the host cell. Packaging is selective for underphosphorylated forms.</text>
</comment>
<comment type="similarity">
    <text evidence="4">Belongs to the alphaherpesvirinae VP22 tegument protein family.</text>
</comment>
<feature type="chain" id="PRO_0000116096" description="Tegument protein VP22">
    <location>
        <begin position="1"/>
        <end position="290"/>
    </location>
</feature>
<feature type="region of interest" description="Disordered" evidence="3">
    <location>
        <begin position="98"/>
        <end position="156"/>
    </location>
</feature>
<feature type="short sequence motif" description="Nuclear localization signal" evidence="2">
    <location>
        <begin position="146"/>
        <end position="149"/>
    </location>
</feature>
<feature type="short sequence motif" description="Nuclear export signal" evidence="2">
    <location>
        <begin position="219"/>
        <end position="231"/>
    </location>
</feature>
<feature type="compositionally biased region" description="Polar residues" evidence="3">
    <location>
        <begin position="98"/>
        <end position="112"/>
    </location>
</feature>
<feature type="compositionally biased region" description="Low complexity" evidence="3">
    <location>
        <begin position="118"/>
        <end position="142"/>
    </location>
</feature>
<name>VP22_EHV4</name>
<accession>Q00039</accession>